<proteinExistence type="evidence at protein level"/>
<organism>
    <name type="scientific">Homo sapiens</name>
    <name type="common">Human</name>
    <dbReference type="NCBI Taxonomy" id="9606"/>
    <lineage>
        <taxon>Eukaryota</taxon>
        <taxon>Metazoa</taxon>
        <taxon>Chordata</taxon>
        <taxon>Craniata</taxon>
        <taxon>Vertebrata</taxon>
        <taxon>Euteleostomi</taxon>
        <taxon>Mammalia</taxon>
        <taxon>Eutheria</taxon>
        <taxon>Euarchontoglires</taxon>
        <taxon>Primates</taxon>
        <taxon>Haplorrhini</taxon>
        <taxon>Catarrhini</taxon>
        <taxon>Hominidae</taxon>
        <taxon>Homo</taxon>
    </lineage>
</organism>
<name>ST1A2_HUMAN</name>
<evidence type="ECO:0000250" key="1"/>
<evidence type="ECO:0000269" key="2">
    <source>
    </source>
</evidence>
<evidence type="ECO:0000269" key="3">
    <source>
    </source>
</evidence>
<evidence type="ECO:0000269" key="4">
    <source>
    </source>
</evidence>
<evidence type="ECO:0000269" key="5">
    <source>
    </source>
</evidence>
<evidence type="ECO:0000269" key="6">
    <source>
    </source>
</evidence>
<evidence type="ECO:0000269" key="7">
    <source>
    </source>
</evidence>
<evidence type="ECO:0000269" key="8">
    <source>
    </source>
</evidence>
<evidence type="ECO:0000269" key="9">
    <source>
    </source>
</evidence>
<evidence type="ECO:0000305" key="10"/>
<evidence type="ECO:0007829" key="11">
    <source>
        <dbReference type="PDB" id="1Z29"/>
    </source>
</evidence>
<sequence length="295" mass="34310">MELIQDISRPPLEYVKGVPLIKYFAEALGPLQSFQARPDDLLISTYPKSGTTWVSQILDMIYQGGDLEKCHRAPIFMRVPFLEFKVPGIPSGMETLKNTPAPRLLKTHLPLALLPQTLLDQKVKVVYVARNAKDVAVSYYHFYHMAKVYPHPGTWESFLEKFMAGEVSYGSWYQHVQEWWELSRTHPVLYLFYEDMKENPKREIQKILEFVGRSLPEETVDLMVEHTSFKEMKKNPMTNYTTVRREFMDHSISPFMRKGMAGDWKTTFTVAQNERFDADYAKKMAGCSLSFRSEL</sequence>
<protein>
    <recommendedName>
        <fullName>Sulfotransferase 1A2</fullName>
        <shortName>ST1A2</shortName>
        <ecNumber>2.8.2.1</ecNumber>
    </recommendedName>
    <alternativeName>
        <fullName>Aryl sulfotransferase 2</fullName>
    </alternativeName>
    <alternativeName>
        <fullName>Phenol sulfotransferase 2</fullName>
    </alternativeName>
    <alternativeName>
        <fullName>Phenol-sulfating phenol sulfotransferase 2</fullName>
        <shortName>P-PST 2</shortName>
    </alternativeName>
</protein>
<feature type="chain" id="PRO_0000085128" description="Sulfotransferase 1A2">
    <location>
        <begin position="1"/>
        <end position="295"/>
    </location>
</feature>
<feature type="active site" description="Proton acceptor" evidence="1">
    <location>
        <position position="108"/>
    </location>
</feature>
<feature type="binding site">
    <location>
        <begin position="48"/>
        <end position="53"/>
    </location>
    <ligand>
        <name>3'-phosphoadenylyl sulfate</name>
        <dbReference type="ChEBI" id="CHEBI:58339"/>
    </ligand>
</feature>
<feature type="binding site" evidence="1">
    <location>
        <begin position="106"/>
        <end position="108"/>
    </location>
    <ligand>
        <name>substrate</name>
    </ligand>
</feature>
<feature type="binding site">
    <location>
        <position position="130"/>
    </location>
    <ligand>
        <name>3'-phosphoadenylyl sulfate</name>
        <dbReference type="ChEBI" id="CHEBI:58339"/>
    </ligand>
</feature>
<feature type="binding site">
    <location>
        <position position="138"/>
    </location>
    <ligand>
        <name>3'-phosphoadenylyl sulfate</name>
        <dbReference type="ChEBI" id="CHEBI:58339"/>
    </ligand>
</feature>
<feature type="binding site">
    <location>
        <position position="193"/>
    </location>
    <ligand>
        <name>3'-phosphoadenylyl sulfate</name>
        <dbReference type="ChEBI" id="CHEBI:58339"/>
    </ligand>
</feature>
<feature type="binding site">
    <location>
        <begin position="227"/>
        <end position="232"/>
    </location>
    <ligand>
        <name>3'-phosphoadenylyl sulfate</name>
        <dbReference type="ChEBI" id="CHEBI:58339"/>
    </ligand>
</feature>
<feature type="binding site">
    <location>
        <begin position="255"/>
        <end position="259"/>
    </location>
    <ligand>
        <name>3'-phosphoadenylyl sulfate</name>
        <dbReference type="ChEBI" id="CHEBI:58339"/>
    </ligand>
</feature>
<feature type="sequence variant" id="VAR_007426" description="In dbSNP:rs1136703." evidence="7 8 9">
    <original>I</original>
    <variation>T</variation>
    <location>
        <position position="7"/>
    </location>
</feature>
<feature type="sequence variant" id="VAR_057340" description="In dbSNP:rs10797300." evidence="5">
    <original>P</original>
    <variation>L</variation>
    <location>
        <position position="19"/>
    </location>
</feature>
<feature type="sequence variant" id="VAR_057341" description="In dbSNP:rs4987024.">
    <original>Y</original>
    <variation>F</variation>
    <location>
        <position position="62"/>
    </location>
</feature>
<feature type="sequence variant" id="VAR_007427" description="In dbSNP:rs1059491." evidence="2 7 8 9">
    <original>N</original>
    <variation>T</variation>
    <location>
        <position position="235"/>
    </location>
</feature>
<feature type="sequence variant" id="VAR_057342" description="In dbSNP:rs45472392.">
    <original>N</original>
    <variation>S</variation>
    <location>
        <position position="239"/>
    </location>
</feature>
<feature type="sequence variant" id="VAR_061887" description="In dbSNP:rs27742." evidence="3 5 6 7 8 9">
    <original>K</original>
    <variation>E</variation>
    <location>
        <position position="282"/>
    </location>
</feature>
<feature type="sequence conflict" description="In Ref. 6; AAC51149/ABX65442." evidence="10" ref="6">
    <original>S</original>
    <variation>T</variation>
    <location>
        <position position="290"/>
    </location>
</feature>
<feature type="strand" evidence="11">
    <location>
        <begin position="13"/>
        <end position="15"/>
    </location>
</feature>
<feature type="strand" evidence="11">
    <location>
        <begin position="18"/>
        <end position="20"/>
    </location>
</feature>
<feature type="helix" evidence="11">
    <location>
        <begin position="22"/>
        <end position="26"/>
    </location>
</feature>
<feature type="helix" evidence="11">
    <location>
        <begin position="30"/>
        <end position="32"/>
    </location>
</feature>
<feature type="strand" evidence="11">
    <location>
        <begin position="41"/>
        <end position="46"/>
    </location>
</feature>
<feature type="helix" evidence="11">
    <location>
        <begin position="51"/>
        <end position="62"/>
    </location>
</feature>
<feature type="helix" evidence="11">
    <location>
        <begin position="75"/>
        <end position="78"/>
    </location>
</feature>
<feature type="helix" evidence="11">
    <location>
        <begin position="92"/>
        <end position="95"/>
    </location>
</feature>
<feature type="turn" evidence="11">
    <location>
        <begin position="96"/>
        <end position="98"/>
    </location>
</feature>
<feature type="strand" evidence="11">
    <location>
        <begin position="104"/>
        <end position="107"/>
    </location>
</feature>
<feature type="turn" evidence="11">
    <location>
        <begin position="111"/>
        <end position="113"/>
    </location>
</feature>
<feature type="helix" evidence="11">
    <location>
        <begin position="116"/>
        <end position="120"/>
    </location>
</feature>
<feature type="strand" evidence="11">
    <location>
        <begin position="124"/>
        <end position="129"/>
    </location>
</feature>
<feature type="helix" evidence="11">
    <location>
        <begin position="132"/>
        <end position="145"/>
    </location>
</feature>
<feature type="helix" evidence="11">
    <location>
        <begin position="155"/>
        <end position="163"/>
    </location>
</feature>
<feature type="helix" evidence="11">
    <location>
        <begin position="172"/>
        <end position="182"/>
    </location>
</feature>
<feature type="turn" evidence="11">
    <location>
        <begin position="183"/>
        <end position="185"/>
    </location>
</feature>
<feature type="strand" evidence="11">
    <location>
        <begin position="188"/>
        <end position="192"/>
    </location>
</feature>
<feature type="helix" evidence="11">
    <location>
        <begin position="193"/>
        <end position="198"/>
    </location>
</feature>
<feature type="helix" evidence="11">
    <location>
        <begin position="200"/>
        <end position="210"/>
    </location>
</feature>
<feature type="helix" evidence="11">
    <location>
        <begin position="217"/>
        <end position="226"/>
    </location>
</feature>
<feature type="helix" evidence="11">
    <location>
        <begin position="229"/>
        <end position="234"/>
    </location>
</feature>
<feature type="turn" evidence="11">
    <location>
        <begin position="236"/>
        <end position="238"/>
    </location>
</feature>
<feature type="turn" evidence="11">
    <location>
        <begin position="245"/>
        <end position="247"/>
    </location>
</feature>
<feature type="turn" evidence="11">
    <location>
        <begin position="250"/>
        <end position="252"/>
    </location>
</feature>
<feature type="helix" evidence="11">
    <location>
        <begin position="263"/>
        <end position="266"/>
    </location>
</feature>
<feature type="helix" evidence="11">
    <location>
        <begin position="270"/>
        <end position="283"/>
    </location>
</feature>
<dbReference type="EC" id="2.8.2.1"/>
<dbReference type="EMBL" id="U28170">
    <property type="protein sequence ID" value="AAB09659.1"/>
    <property type="molecule type" value="mRNA"/>
</dbReference>
<dbReference type="EMBL" id="U28169">
    <property type="protein sequence ID" value="AAB09658.1"/>
    <property type="molecule type" value="mRNA"/>
</dbReference>
<dbReference type="EMBL" id="X78282">
    <property type="protein sequence ID" value="CAA55088.1"/>
    <property type="molecule type" value="mRNA"/>
</dbReference>
<dbReference type="EMBL" id="U34804">
    <property type="protein sequence ID" value="AAB09758.1"/>
    <property type="molecule type" value="Genomic_DNA"/>
</dbReference>
<dbReference type="EMBL" id="U72202">
    <property type="protein sequence ID" value="AAB08970.1"/>
    <property type="molecule type" value="Genomic_DNA"/>
</dbReference>
<dbReference type="EMBL" id="U72196">
    <property type="protein sequence ID" value="AAB08970.1"/>
    <property type="status" value="JOINED"/>
    <property type="molecule type" value="Genomic_DNA"/>
</dbReference>
<dbReference type="EMBL" id="U72197">
    <property type="protein sequence ID" value="AAB08970.1"/>
    <property type="status" value="JOINED"/>
    <property type="molecule type" value="Genomic_DNA"/>
</dbReference>
<dbReference type="EMBL" id="U72198">
    <property type="protein sequence ID" value="AAB08970.1"/>
    <property type="status" value="JOINED"/>
    <property type="molecule type" value="Genomic_DNA"/>
</dbReference>
<dbReference type="EMBL" id="U72199">
    <property type="protein sequence ID" value="AAB08970.1"/>
    <property type="status" value="JOINED"/>
    <property type="molecule type" value="Genomic_DNA"/>
</dbReference>
<dbReference type="EMBL" id="U72200">
    <property type="protein sequence ID" value="AAB08970.1"/>
    <property type="status" value="JOINED"/>
    <property type="molecule type" value="Genomic_DNA"/>
</dbReference>
<dbReference type="EMBL" id="U72201">
    <property type="protein sequence ID" value="AAB08970.1"/>
    <property type="status" value="JOINED"/>
    <property type="molecule type" value="Genomic_DNA"/>
</dbReference>
<dbReference type="EMBL" id="U76619">
    <property type="protein sequence ID" value="AAB18753.1"/>
    <property type="molecule type" value="Genomic_DNA"/>
</dbReference>
<dbReference type="EMBL" id="U33886">
    <property type="protein sequence ID" value="AAC51149.1"/>
    <property type="molecule type" value="Genomic_DNA"/>
</dbReference>
<dbReference type="EMBL" id="U33886">
    <property type="protein sequence ID" value="ABX65442.1"/>
    <property type="molecule type" value="Genomic_DNA"/>
</dbReference>
<dbReference type="EMBL" id="AC020765">
    <property type="status" value="NOT_ANNOTATED_CDS"/>
    <property type="molecule type" value="Genomic_DNA"/>
</dbReference>
<dbReference type="EMBL" id="BC113727">
    <property type="protein sequence ID" value="AAI13728.1"/>
    <property type="molecule type" value="mRNA"/>
</dbReference>
<dbReference type="EMBL" id="BC113729">
    <property type="protein sequence ID" value="AAI13730.1"/>
    <property type="molecule type" value="mRNA"/>
</dbReference>
<dbReference type="CCDS" id="CCDS10636.1"/>
<dbReference type="PIR" id="G01843">
    <property type="entry name" value="G01843"/>
</dbReference>
<dbReference type="PIR" id="JC5249">
    <property type="entry name" value="JC5249"/>
</dbReference>
<dbReference type="PIR" id="S52791">
    <property type="entry name" value="S52791"/>
</dbReference>
<dbReference type="RefSeq" id="NP_001045.2">
    <property type="nucleotide sequence ID" value="NM_001054.4"/>
</dbReference>
<dbReference type="RefSeq" id="NP_001387187.1">
    <property type="nucleotide sequence ID" value="NM_001400258.1"/>
</dbReference>
<dbReference type="RefSeq" id="NP_001387188.1">
    <property type="nucleotide sequence ID" value="NM_001400259.1"/>
</dbReference>
<dbReference type="RefSeq" id="NP_001387193.1">
    <property type="nucleotide sequence ID" value="NM_001400264.1"/>
</dbReference>
<dbReference type="RefSeq" id="NP_803564.2">
    <property type="nucleotide sequence ID" value="NM_177528.4"/>
</dbReference>
<dbReference type="PDB" id="1Z29">
    <property type="method" value="X-ray"/>
    <property type="resolution" value="2.40 A"/>
    <property type="chains" value="A=1-295"/>
</dbReference>
<dbReference type="PDBsum" id="1Z29"/>
<dbReference type="SMR" id="P50226"/>
<dbReference type="BioGRID" id="112673">
    <property type="interactions" value="18"/>
</dbReference>
<dbReference type="FunCoup" id="P50226">
    <property type="interactions" value="563"/>
</dbReference>
<dbReference type="IntAct" id="P50226">
    <property type="interactions" value="11"/>
</dbReference>
<dbReference type="STRING" id="9606.ENSP00000378992"/>
<dbReference type="ChEMBL" id="CHEMBL1743292"/>
<dbReference type="DrugBank" id="DB00714">
    <property type="generic name" value="Apomorphine"/>
</dbReference>
<dbReference type="DrugBank" id="DB12243">
    <property type="generic name" value="Edaravone"/>
</dbReference>
<dbReference type="DrugBank" id="DB12471">
    <property type="generic name" value="Ibrexafungerp"/>
</dbReference>
<dbReference type="DrugBank" id="DB00968">
    <property type="generic name" value="Methyldopa"/>
</dbReference>
<dbReference type="DrugBank" id="DB00960">
    <property type="generic name" value="Pindolol"/>
</dbReference>
<dbReference type="DrugBank" id="DB00867">
    <property type="generic name" value="Ritodrine"/>
</dbReference>
<dbReference type="DrugBank" id="DB00871">
    <property type="generic name" value="Terbutaline"/>
</dbReference>
<dbReference type="DrugBank" id="DB09100">
    <property type="generic name" value="Thyroid, porcine"/>
</dbReference>
<dbReference type="GlyGen" id="P50226">
    <property type="glycosylation" value="1 site, 1 O-linked glycan (1 site)"/>
</dbReference>
<dbReference type="iPTMnet" id="P50226"/>
<dbReference type="PhosphoSitePlus" id="P50226"/>
<dbReference type="BioMuta" id="SULT1A2"/>
<dbReference type="DMDM" id="288558827"/>
<dbReference type="jPOST" id="P50226"/>
<dbReference type="MassIVE" id="P50226"/>
<dbReference type="PaxDb" id="9606-ENSP00000378992"/>
<dbReference type="PeptideAtlas" id="P50226"/>
<dbReference type="ProteomicsDB" id="56211"/>
<dbReference type="Pumba" id="P50226"/>
<dbReference type="Antibodypedia" id="66741">
    <property type="antibodies" value="83 antibodies from 20 providers"/>
</dbReference>
<dbReference type="DNASU" id="6799"/>
<dbReference type="Ensembl" id="ENST00000335715.9">
    <property type="protein sequence ID" value="ENSP00000338742.4"/>
    <property type="gene ID" value="ENSG00000197165.11"/>
</dbReference>
<dbReference type="Ensembl" id="ENST00000395630.5">
    <property type="protein sequence ID" value="ENSP00000378992.1"/>
    <property type="gene ID" value="ENSG00000197165.11"/>
</dbReference>
<dbReference type="GeneID" id="6799"/>
<dbReference type="KEGG" id="hsa:6799"/>
<dbReference type="MANE-Select" id="ENST00000335715.9">
    <property type="protein sequence ID" value="ENSP00000338742.4"/>
    <property type="RefSeq nucleotide sequence ID" value="NM_001054.4"/>
    <property type="RefSeq protein sequence ID" value="NP_001045.2"/>
</dbReference>
<dbReference type="UCSC" id="uc002dqg.3">
    <property type="organism name" value="human"/>
</dbReference>
<dbReference type="AGR" id="HGNC:11454"/>
<dbReference type="CTD" id="6799"/>
<dbReference type="DisGeNET" id="6799"/>
<dbReference type="GeneCards" id="SULT1A2"/>
<dbReference type="HGNC" id="HGNC:11454">
    <property type="gene designation" value="SULT1A2"/>
</dbReference>
<dbReference type="HPA" id="ENSG00000197165">
    <property type="expression patterns" value="Group enriched (intestine, liver)"/>
</dbReference>
<dbReference type="MIM" id="601292">
    <property type="type" value="gene"/>
</dbReference>
<dbReference type="neXtProt" id="NX_P50226"/>
<dbReference type="OpenTargets" id="ENSG00000197165"/>
<dbReference type="PharmGKB" id="PA341"/>
<dbReference type="VEuPathDB" id="HostDB:ENSG00000197165"/>
<dbReference type="eggNOG" id="KOG1584">
    <property type="taxonomic scope" value="Eukaryota"/>
</dbReference>
<dbReference type="GeneTree" id="ENSGT00940000163450"/>
<dbReference type="HOGENOM" id="CLU_027239_1_2_1"/>
<dbReference type="InParanoid" id="P50226"/>
<dbReference type="OMA" id="DTRSQEN"/>
<dbReference type="OrthoDB" id="205623at2759"/>
<dbReference type="PAN-GO" id="P50226">
    <property type="GO annotations" value="3 GO annotations based on evolutionary models"/>
</dbReference>
<dbReference type="PhylomeDB" id="P50226"/>
<dbReference type="TreeFam" id="TF321745"/>
<dbReference type="BioCyc" id="MetaCyc:HS11091-MONOMER"/>
<dbReference type="BRENDA" id="2.8.2.1">
    <property type="organism ID" value="2681"/>
</dbReference>
<dbReference type="BRENDA" id="2.8.2.2">
    <property type="organism ID" value="2681"/>
</dbReference>
<dbReference type="BRENDA" id="2.8.2.9">
    <property type="organism ID" value="2681"/>
</dbReference>
<dbReference type="PathwayCommons" id="P50226"/>
<dbReference type="Reactome" id="R-HSA-156584">
    <property type="pathway name" value="Cytosolic sulfonation of small molecules"/>
</dbReference>
<dbReference type="SABIO-RK" id="P50226"/>
<dbReference type="SignaLink" id="P50226"/>
<dbReference type="BioGRID-ORCS" id="6799">
    <property type="hits" value="19 hits in 1149 CRISPR screens"/>
</dbReference>
<dbReference type="ChiTaRS" id="SULT1A2">
    <property type="organism name" value="human"/>
</dbReference>
<dbReference type="EvolutionaryTrace" id="P50226"/>
<dbReference type="GeneWiki" id="SULT1A2"/>
<dbReference type="GenomeRNAi" id="6799"/>
<dbReference type="Pharos" id="P50226">
    <property type="development level" value="Tbio"/>
</dbReference>
<dbReference type="PRO" id="PR:P50226"/>
<dbReference type="Proteomes" id="UP000005640">
    <property type="component" value="Chromosome 16"/>
</dbReference>
<dbReference type="RNAct" id="P50226">
    <property type="molecule type" value="protein"/>
</dbReference>
<dbReference type="Bgee" id="ENSG00000197165">
    <property type="expression patterns" value="Expressed in duodenum and 92 other cell types or tissues"/>
</dbReference>
<dbReference type="ExpressionAtlas" id="P50226">
    <property type="expression patterns" value="baseline and differential"/>
</dbReference>
<dbReference type="GO" id="GO:0005737">
    <property type="term" value="C:cytoplasm"/>
    <property type="evidence" value="ECO:0000318"/>
    <property type="project" value="GO_Central"/>
</dbReference>
<dbReference type="GO" id="GO:0005829">
    <property type="term" value="C:cytosol"/>
    <property type="evidence" value="ECO:0000304"/>
    <property type="project" value="Reactome"/>
</dbReference>
<dbReference type="GO" id="GO:0004062">
    <property type="term" value="F:aryl sulfotransferase activity"/>
    <property type="evidence" value="ECO:0000314"/>
    <property type="project" value="UniProtKB"/>
</dbReference>
<dbReference type="GO" id="GO:0047894">
    <property type="term" value="F:flavonol 3-sulfotransferase activity"/>
    <property type="evidence" value="ECO:0000314"/>
    <property type="project" value="BHF-UCL"/>
</dbReference>
<dbReference type="GO" id="GO:0008146">
    <property type="term" value="F:sulfotransferase activity"/>
    <property type="evidence" value="ECO:0000304"/>
    <property type="project" value="ProtInc"/>
</dbReference>
<dbReference type="GO" id="GO:0050427">
    <property type="term" value="P:3'-phosphoadenosine 5'-phosphosulfate metabolic process"/>
    <property type="evidence" value="ECO:0000314"/>
    <property type="project" value="CAFA"/>
</dbReference>
<dbReference type="GO" id="GO:0009309">
    <property type="term" value="P:amine biosynthetic process"/>
    <property type="evidence" value="ECO:0000304"/>
    <property type="project" value="ProtInc"/>
</dbReference>
<dbReference type="GO" id="GO:0006584">
    <property type="term" value="P:catecholamine metabolic process"/>
    <property type="evidence" value="ECO:0007669"/>
    <property type="project" value="UniProtKB-KW"/>
</dbReference>
<dbReference type="GO" id="GO:0006068">
    <property type="term" value="P:ethanol catabolic process"/>
    <property type="evidence" value="ECO:0000314"/>
    <property type="project" value="CAFA"/>
</dbReference>
<dbReference type="GO" id="GO:0018958">
    <property type="term" value="P:phenol-containing compound metabolic process"/>
    <property type="evidence" value="ECO:0000314"/>
    <property type="project" value="UniProtKB"/>
</dbReference>
<dbReference type="GO" id="GO:0008202">
    <property type="term" value="P:steroid metabolic process"/>
    <property type="evidence" value="ECO:0007669"/>
    <property type="project" value="UniProtKB-KW"/>
</dbReference>
<dbReference type="GO" id="GO:0051923">
    <property type="term" value="P:sulfation"/>
    <property type="evidence" value="ECO:0000314"/>
    <property type="project" value="BHF-UCL"/>
</dbReference>
<dbReference type="GO" id="GO:0006805">
    <property type="term" value="P:xenobiotic metabolic process"/>
    <property type="evidence" value="ECO:0000314"/>
    <property type="project" value="UniProtKB"/>
</dbReference>
<dbReference type="FunFam" id="3.40.50.300:FF:000433">
    <property type="entry name" value="Estrogen sulfotransferase"/>
    <property type="match status" value="1"/>
</dbReference>
<dbReference type="Gene3D" id="3.40.50.300">
    <property type="entry name" value="P-loop containing nucleotide triphosphate hydrolases"/>
    <property type="match status" value="1"/>
</dbReference>
<dbReference type="InterPro" id="IPR027417">
    <property type="entry name" value="P-loop_NTPase"/>
</dbReference>
<dbReference type="InterPro" id="IPR000863">
    <property type="entry name" value="Sulfotransferase_dom"/>
</dbReference>
<dbReference type="PANTHER" id="PTHR11783">
    <property type="entry name" value="SULFOTRANSFERASE SULT"/>
    <property type="match status" value="1"/>
</dbReference>
<dbReference type="Pfam" id="PF00685">
    <property type="entry name" value="Sulfotransfer_1"/>
    <property type="match status" value="1"/>
</dbReference>
<dbReference type="SUPFAM" id="SSF52540">
    <property type="entry name" value="P-loop containing nucleoside triphosphate hydrolases"/>
    <property type="match status" value="1"/>
</dbReference>
<keyword id="KW-0002">3D-structure</keyword>
<keyword id="KW-0128">Catecholamine metabolism</keyword>
<keyword id="KW-0963">Cytoplasm</keyword>
<keyword id="KW-0443">Lipid metabolism</keyword>
<keyword id="KW-1267">Proteomics identification</keyword>
<keyword id="KW-1185">Reference proteome</keyword>
<keyword id="KW-0753">Steroid metabolism</keyword>
<keyword id="KW-0808">Transferase</keyword>
<accession>P50226</accession>
<accession>A9QY25</accession>
<accession>P78393</accession>
<accession>Q14CJ7</accession>
<reference key="1">
    <citation type="journal article" date="1996" name="Int. J. Biochem. Cell Biol.">
        <title>cDNA cloning and expression of a new form of human aryl sulfotransferase.</title>
        <authorList>
            <person name="Zhu X."/>
            <person name="Veronese M.E."/>
            <person name="Iocco P."/>
            <person name="McManus M.E."/>
        </authorList>
    </citation>
    <scope>NUCLEOTIDE SEQUENCE [MRNA]</scope>
    <scope>VARIANTS THR-7; THR-235 AND GLU-282</scope>
    <source>
        <tissue>Liver</tissue>
    </source>
</reference>
<reference key="2">
    <citation type="journal article" date="1995" name="Pharmacogenetics">
        <title>Primary structures and properties of two related forms of aryl sulfotransferases in human liver.</title>
        <authorList>
            <person name="Ozawa S."/>
            <person name="Nagata K."/>
            <person name="Shimada M."/>
            <person name="Ueda M."/>
            <person name="Tsuzuki T."/>
            <person name="Yamazoe Y."/>
            <person name="Kato R."/>
        </authorList>
    </citation>
    <scope>NUCLEOTIDE SEQUENCE [MRNA]</scope>
    <scope>VARIANTS LEU-19 AND GLU-282</scope>
    <source>
        <tissue>Liver</tissue>
    </source>
</reference>
<reference key="3">
    <citation type="journal article" date="1994" name="Chem. Biol. Interact.">
        <title>Structural similarity and diversity of sulfotransferases.</title>
        <authorList>
            <person name="Yamazoe Y."/>
            <person name="Nagata K."/>
            <person name="Ozawa S."/>
            <person name="Kato R."/>
        </authorList>
    </citation>
    <scope>NUCLEOTIDE SEQUENCE [MRNA]</scope>
</reference>
<reference key="4">
    <citation type="journal article" date="1996" name="Genomics">
        <title>Human phenol sulfotransferase STP2 gene: molecular cloning, structural characterization, and chromosomal localization.</title>
        <authorList>
            <person name="Her C."/>
            <person name="Raftogianis R."/>
            <person name="Weinshilboum R.M."/>
        </authorList>
    </citation>
    <scope>NUCLEOTIDE SEQUENCE [GENOMIC DNA]</scope>
    <scope>VARIANT GLU-282</scope>
</reference>
<reference key="5">
    <citation type="journal article" date="1996" name="Biochem. Biophys. Res. Commun.">
        <title>Genomic organization and DNA sequences of two human phenol sulfotransferase genes (STP1 and STP2) on the short arm of chromosome 16.</title>
        <authorList>
            <person name="Dooley T.P."/>
            <person name="Huang Z."/>
        </authorList>
    </citation>
    <scope>NUCLEOTIDE SEQUENCE [GENOMIC DNA]</scope>
    <scope>VARIANTS THR-7; THR-235 AND GLU-282</scope>
</reference>
<reference key="6">
    <citation type="journal article" date="1997" name="Genomics">
        <title>Cloning, structural organization, and chromosomal mapping of the human phenol sulfotransferase STP2 gene.</title>
        <authorList>
            <person name="Gaedigk A."/>
            <person name="Beatty B.G."/>
            <person name="Grant D.M."/>
        </authorList>
    </citation>
    <scope>NUCLEOTIDE SEQUENCE [GENOMIC DNA]</scope>
    <scope>VARIANTS THR-7; THR-235 AND GLU-282</scope>
</reference>
<reference key="7">
    <citation type="journal article" date="2004" name="Nature">
        <title>The sequence and analysis of duplication-rich human chromosome 16.</title>
        <authorList>
            <person name="Martin J."/>
            <person name="Han C."/>
            <person name="Gordon L.A."/>
            <person name="Terry A."/>
            <person name="Prabhakar S."/>
            <person name="She X."/>
            <person name="Xie G."/>
            <person name="Hellsten U."/>
            <person name="Chan Y.M."/>
            <person name="Altherr M."/>
            <person name="Couronne O."/>
            <person name="Aerts A."/>
            <person name="Bajorek E."/>
            <person name="Black S."/>
            <person name="Blumer H."/>
            <person name="Branscomb E."/>
            <person name="Brown N.C."/>
            <person name="Bruno W.J."/>
            <person name="Buckingham J.M."/>
            <person name="Callen D.F."/>
            <person name="Campbell C.S."/>
            <person name="Campbell M.L."/>
            <person name="Campbell E.W."/>
            <person name="Caoile C."/>
            <person name="Challacombe J.F."/>
            <person name="Chasteen L.A."/>
            <person name="Chertkov O."/>
            <person name="Chi H.C."/>
            <person name="Christensen M."/>
            <person name="Clark L.M."/>
            <person name="Cohn J.D."/>
            <person name="Denys M."/>
            <person name="Detter J.C."/>
            <person name="Dickson M."/>
            <person name="Dimitrijevic-Bussod M."/>
            <person name="Escobar J."/>
            <person name="Fawcett J.J."/>
            <person name="Flowers D."/>
            <person name="Fotopulos D."/>
            <person name="Glavina T."/>
            <person name="Gomez M."/>
            <person name="Gonzales E."/>
            <person name="Goodstein D."/>
            <person name="Goodwin L.A."/>
            <person name="Grady D.L."/>
            <person name="Grigoriev I."/>
            <person name="Groza M."/>
            <person name="Hammon N."/>
            <person name="Hawkins T."/>
            <person name="Haydu L."/>
            <person name="Hildebrand C.E."/>
            <person name="Huang W."/>
            <person name="Israni S."/>
            <person name="Jett J."/>
            <person name="Jewett P.B."/>
            <person name="Kadner K."/>
            <person name="Kimball H."/>
            <person name="Kobayashi A."/>
            <person name="Krawczyk M.-C."/>
            <person name="Leyba T."/>
            <person name="Longmire J.L."/>
            <person name="Lopez F."/>
            <person name="Lou Y."/>
            <person name="Lowry S."/>
            <person name="Ludeman T."/>
            <person name="Manohar C.F."/>
            <person name="Mark G.A."/>
            <person name="McMurray K.L."/>
            <person name="Meincke L.J."/>
            <person name="Morgan J."/>
            <person name="Moyzis R.K."/>
            <person name="Mundt M.O."/>
            <person name="Munk A.C."/>
            <person name="Nandkeshwar R.D."/>
            <person name="Pitluck S."/>
            <person name="Pollard M."/>
            <person name="Predki P."/>
            <person name="Parson-Quintana B."/>
            <person name="Ramirez L."/>
            <person name="Rash S."/>
            <person name="Retterer J."/>
            <person name="Ricke D.O."/>
            <person name="Robinson D.L."/>
            <person name="Rodriguez A."/>
            <person name="Salamov A."/>
            <person name="Saunders E.H."/>
            <person name="Scott D."/>
            <person name="Shough T."/>
            <person name="Stallings R.L."/>
            <person name="Stalvey M."/>
            <person name="Sutherland R.D."/>
            <person name="Tapia R."/>
            <person name="Tesmer J.G."/>
            <person name="Thayer N."/>
            <person name="Thompson L.S."/>
            <person name="Tice H."/>
            <person name="Torney D.C."/>
            <person name="Tran-Gyamfi M."/>
            <person name="Tsai M."/>
            <person name="Ulanovsky L.E."/>
            <person name="Ustaszewska A."/>
            <person name="Vo N."/>
            <person name="White P.S."/>
            <person name="Williams A.L."/>
            <person name="Wills P.L."/>
            <person name="Wu J.-R."/>
            <person name="Wu K."/>
            <person name="Yang J."/>
            <person name="DeJong P."/>
            <person name="Bruce D."/>
            <person name="Doggett N.A."/>
            <person name="Deaven L."/>
            <person name="Schmutz J."/>
            <person name="Grimwood J."/>
            <person name="Richardson P."/>
            <person name="Rokhsar D.S."/>
            <person name="Eichler E.E."/>
            <person name="Gilna P."/>
            <person name="Lucas S.M."/>
            <person name="Myers R.M."/>
            <person name="Rubin E.M."/>
            <person name="Pennacchio L.A."/>
        </authorList>
    </citation>
    <scope>NUCLEOTIDE SEQUENCE [LARGE SCALE GENOMIC DNA]</scope>
</reference>
<reference key="8">
    <citation type="journal article" date="2004" name="Genome Res.">
        <title>The status, quality, and expansion of the NIH full-length cDNA project: the Mammalian Gene Collection (MGC).</title>
        <authorList>
            <consortium name="The MGC Project Team"/>
        </authorList>
    </citation>
    <scope>NUCLEOTIDE SEQUENCE [LARGE SCALE MRNA]</scope>
    <scope>VARIANT GLU-282</scope>
    <source>
        <tissue>Brain</tissue>
    </source>
</reference>
<reference key="9">
    <citation type="journal article" date="1994" name="Environ. Health Perspect.">
        <title>Characterization and expression of hepatic sulfotransferase involved in the metabolism of N-substituted aryl compounds.</title>
        <authorList>
            <person name="Yamazoe Y."/>
            <person name="Ozawa S."/>
            <person name="Nagata K."/>
            <person name="Gong D.-W."/>
            <person name="Kato R."/>
        </authorList>
    </citation>
    <scope>CHARACTERIZATION</scope>
</reference>
<reference key="10">
    <citation type="journal article" date="2010" name="Biochem. Biophys. Res. Commun.">
        <title>Crystal structures of SULT1A2 and SULT1A1 *3: insights into the substrate inhibition and the role of Tyr149 in SULT1A2.</title>
        <authorList>
            <person name="Lu J."/>
            <person name="Li H."/>
            <person name="Zhang J."/>
            <person name="Li M."/>
            <person name="Liu M.Y."/>
            <person name="An X."/>
            <person name="Liu M.C."/>
            <person name="Chang W."/>
        </authorList>
    </citation>
    <scope>X-RAY CRYSTALLOGRAPHY (2.4 ANGSTROMS) IN COMPLEX WITH ADENOSINE-3'-5'-DIPHOSPHATE</scope>
    <scope>CATALYTIC ACTIVITY</scope>
</reference>
<reference key="11">
    <citation type="journal article" date="2000" name="Pharmacogenetics">
        <title>Association between functional genetic polymorphisms of human sulfotransferases 1A1 and 1A2.</title>
        <authorList>
            <person name="Engelke C.E."/>
            <person name="Meinl W."/>
            <person name="Boeing H."/>
            <person name="Glatt H."/>
        </authorList>
    </citation>
    <scope>VARIANT THR-235</scope>
</reference>
<comment type="function">
    <text>Sulfotransferase that utilizes 3'-phospho-5'-adenylyl sulfate (PAPS) as sulfonate donor to catalyze the sulfate conjugation of catecholamines, phenolic drugs and neurotransmitters. Is also responsible for the sulfonation and activation of minoxidil. Mediates the metabolic activation of carcinogenic N-hydroxyarylamines to DNA binding products and could so participate as modulating factor of cancer risk.</text>
</comment>
<comment type="catalytic activity">
    <reaction evidence="4">
        <text>a phenol + 3'-phosphoadenylyl sulfate = an aryl sulfate + adenosine 3',5'-bisphosphate + H(+)</text>
        <dbReference type="Rhea" id="RHEA:12164"/>
        <dbReference type="ChEBI" id="CHEBI:15378"/>
        <dbReference type="ChEBI" id="CHEBI:33853"/>
        <dbReference type="ChEBI" id="CHEBI:58339"/>
        <dbReference type="ChEBI" id="CHEBI:58343"/>
        <dbReference type="ChEBI" id="CHEBI:140317"/>
        <dbReference type="EC" id="2.8.2.1"/>
    </reaction>
</comment>
<comment type="subunit">
    <text evidence="1">Homodimer.</text>
</comment>
<comment type="interaction">
    <interactant intactId="EBI-6137631">
        <id>P50226</id>
    </interactant>
    <interactant intactId="EBI-740897">
        <id>Q9GZT8</id>
        <label>NIF3L1</label>
    </interactant>
    <organismsDiffer>false</organismsDiffer>
    <experiments>3</experiments>
</comment>
<comment type="subcellular location">
    <subcellularLocation>
        <location>Cytoplasm</location>
    </subcellularLocation>
</comment>
<comment type="similarity">
    <text evidence="10">Belongs to the sulfotransferase 1 family.</text>
</comment>
<gene>
    <name type="primary">SULT1A2</name>
    <name type="synonym">STP2</name>
</gene>